<feature type="chain" id="PRO_0000039093" description="Hemagglutinin HA1 chain">
    <location>
        <begin position="1"/>
        <end position="346"/>
    </location>
</feature>
<feature type="glycosylation site" description="N-linked (GlcNAc...) asparagine; by host" evidence="2">
    <location>
        <position position="25"/>
    </location>
</feature>
<feature type="glycosylation site" description="N-linked (GlcNAc...) asparagine; by host" evidence="2">
    <location>
        <position position="59"/>
    </location>
</feature>
<feature type="glycosylation site" description="N-linked (GlcNAc...) asparagine; by host" evidence="2">
    <location>
        <position position="145"/>
    </location>
</feature>
<feature type="glycosylation site" description="N-linked (GlcNAc...) asparagine; by host" evidence="2">
    <location>
        <position position="166"/>
    </location>
</feature>
<feature type="glycosylation site" description="N-linked (GlcNAc...) asparagine; by host" evidence="2">
    <location>
        <position position="304"/>
    </location>
</feature>
<feature type="glycosylation site" description="N-linked (GlcNAc...) asparagine; by host" evidence="2">
    <location>
        <position position="333"/>
    </location>
</feature>
<feature type="non-terminal residue">
    <location>
        <position position="1"/>
    </location>
</feature>
<feature type="non-terminal residue">
    <location>
        <position position="347"/>
    </location>
</feature>
<protein>
    <recommendedName>
        <fullName>Hemagglutinin</fullName>
    </recommendedName>
    <component>
        <recommendedName>
            <fullName>Hemagglutinin HA1 chain</fullName>
        </recommendedName>
    </component>
</protein>
<comment type="function">
    <text>Binds to sialic acid-containing receptors on the cell surface, bringing about the attachment of the virus particle to the cell. Plays a major role in the determination of host range restriction and virulence. Class I viral fusion protein. Responsible for penetration of the virus into the cell cytoplasm by mediating the fusion of the membrane of the endocytosed virus particle with the endosomal membrane. Low pH in endosomes induce an irreversible conformational change in HA2, releasing the fusion hydrophobic peptide. Several trimers are required to form a competent fusion pore.</text>
</comment>
<comment type="subunit">
    <text>Homotrimer of disulfide-linked HA1-HA2.</text>
</comment>
<comment type="subcellular location">
    <subcellularLocation>
        <location evidence="3">Virion membrane</location>
        <topology evidence="3">Single-pass type I membrane protein</topology>
    </subcellularLocation>
    <subcellularLocation>
        <location>Host apical cell membrane</location>
        <topology>Single-pass type I membrane protein</topology>
    </subcellularLocation>
    <text>Targeted to the apical plasma membrane in epithelial polarized cells through a signal present in the transmembrane domain. Associated with glycosphingolipid- and cholesterol-enriched detergent-resistant lipid rafts.</text>
</comment>
<comment type="PTM">
    <text evidence="1">In natural infection, inactive HA is matured into HA1 and HA2 outside the cell by one or more trypsin-like, arginine-specific endoprotease secreted by the bronchial epithelial cells. One identified protease that may be involved in this process is secreted in lungs by club cells (By similarity).</text>
</comment>
<comment type="PTM">
    <text evidence="1">Palmitoylated.</text>
</comment>
<comment type="miscellaneous">
    <text>Major glycoprotein, comprises over 80% of the envelope proteins present in virus particle.</text>
</comment>
<comment type="miscellaneous">
    <text>The extent of infection into host organism is determined by HA. Influenza viruses bud from the apical surface of polarized epithelial cells (e.g. bronchial epithelial cells) into lumen of lungs and are therefore usually pneumotropic. The reason is that HA is cleaved by tryptase clara which is restricted to lungs. However, HAs of H5 and H7 pantropic avian viruses subtypes can be cleaved by furin and subtilisin-type enzymes, allowing the virus to grow in other organs than lungs.</text>
</comment>
<comment type="miscellaneous">
    <text>The influenza B genome consist of 8 RNA segments. Genetic variation of hemagglutinin and/or neuraminidase genes results in the emergence of new influenza strains. The mechanism of variation can be the result of point mutations or the result of genetic reassortment between segments of two different strains.</text>
</comment>
<comment type="similarity">
    <text evidence="3">Belongs to the influenza viruses hemagglutinin family.</text>
</comment>
<organismHost>
    <name type="scientific">Homo sapiens</name>
    <name type="common">Human</name>
    <dbReference type="NCBI Taxonomy" id="9606"/>
</organismHost>
<name>HEMA_INBF1</name>
<reference key="1">
    <citation type="journal article" date="1992" name="J. Gen. Virol.">
        <title>Evolution of influenza B/Victoria/2/87-like viruses: occurrence of a genetically conserved virus under conditions of low epidemic activity.</title>
        <authorList>
            <person name="Kinnunen L."/>
            <person name="Ikonen N."/>
            <person name="Poeyry T."/>
            <person name="Pyhaelae R."/>
        </authorList>
    </citation>
    <scope>NUCLEOTIDE SEQUENCE [GENOMIC RNA]</scope>
</reference>
<accession>Q07925</accession>
<evidence type="ECO:0000250" key="1"/>
<evidence type="ECO:0000255" key="2"/>
<evidence type="ECO:0000305" key="3"/>
<organism>
    <name type="scientific">Influenza B virus (strain B/Finland/24/1985)</name>
    <dbReference type="NCBI Taxonomy" id="38996"/>
    <lineage>
        <taxon>Viruses</taxon>
        <taxon>Riboviria</taxon>
        <taxon>Orthornavirae</taxon>
        <taxon>Negarnaviricota</taxon>
        <taxon>Polyploviricotina</taxon>
        <taxon>Insthoviricetes</taxon>
        <taxon>Articulavirales</taxon>
        <taxon>Orthomyxoviridae</taxon>
        <taxon>Betainfluenzavirus</taxon>
        <taxon>Betainfluenzavirus influenzae</taxon>
        <taxon>Influenza B virus</taxon>
    </lineage>
</organism>
<gene>
    <name type="primary">HA</name>
</gene>
<keyword id="KW-1015">Disulfide bond</keyword>
<keyword id="KW-1170">Fusion of virus membrane with host endosomal membrane</keyword>
<keyword id="KW-1168">Fusion of virus membrane with host membrane</keyword>
<keyword id="KW-0325">Glycoprotein</keyword>
<keyword id="KW-0348">Hemagglutinin</keyword>
<keyword id="KW-1032">Host cell membrane</keyword>
<keyword id="KW-1043">Host membrane</keyword>
<keyword id="KW-0945">Host-virus interaction</keyword>
<keyword id="KW-0449">Lipoprotein</keyword>
<keyword id="KW-0472">Membrane</keyword>
<keyword id="KW-0564">Palmitate</keyword>
<keyword id="KW-0812">Transmembrane</keyword>
<keyword id="KW-1161">Viral attachment to host cell</keyword>
<keyword id="KW-0261">Viral envelope protein</keyword>
<keyword id="KW-1162">Viral penetration into host cytoplasm</keyword>
<keyword id="KW-0946">Virion</keyword>
<keyword id="KW-1160">Virus entry into host cell</keyword>
<dbReference type="EMBL" id="L19646">
    <property type="protein sequence ID" value="AAA50374.1"/>
    <property type="molecule type" value="Genomic_RNA"/>
</dbReference>
<dbReference type="GlyCosmos" id="Q07925">
    <property type="glycosylation" value="6 sites, No reported glycans"/>
</dbReference>
<dbReference type="GO" id="GO:0020002">
    <property type="term" value="C:host cell plasma membrane"/>
    <property type="evidence" value="ECO:0007669"/>
    <property type="project" value="UniProtKB-SubCell"/>
</dbReference>
<dbReference type="GO" id="GO:0016020">
    <property type="term" value="C:membrane"/>
    <property type="evidence" value="ECO:0007669"/>
    <property type="project" value="UniProtKB-KW"/>
</dbReference>
<dbReference type="GO" id="GO:0019031">
    <property type="term" value="C:viral envelope"/>
    <property type="evidence" value="ECO:0007669"/>
    <property type="project" value="UniProtKB-KW"/>
</dbReference>
<dbReference type="GO" id="GO:0055036">
    <property type="term" value="C:virion membrane"/>
    <property type="evidence" value="ECO:0007669"/>
    <property type="project" value="UniProtKB-SubCell"/>
</dbReference>
<dbReference type="GO" id="GO:0046789">
    <property type="term" value="F:host cell surface receptor binding"/>
    <property type="evidence" value="ECO:0007669"/>
    <property type="project" value="InterPro"/>
</dbReference>
<dbReference type="GO" id="GO:0039654">
    <property type="term" value="P:fusion of virus membrane with host endosome membrane"/>
    <property type="evidence" value="ECO:0007669"/>
    <property type="project" value="UniProtKB-KW"/>
</dbReference>
<dbReference type="GO" id="GO:0019064">
    <property type="term" value="P:fusion of virus membrane with host plasma membrane"/>
    <property type="evidence" value="ECO:0007669"/>
    <property type="project" value="InterPro"/>
</dbReference>
<dbReference type="GO" id="GO:0046718">
    <property type="term" value="P:symbiont entry into host cell"/>
    <property type="evidence" value="ECO:0007669"/>
    <property type="project" value="UniProtKB-KW"/>
</dbReference>
<dbReference type="GO" id="GO:0019062">
    <property type="term" value="P:virion attachment to host cell"/>
    <property type="evidence" value="ECO:0007669"/>
    <property type="project" value="UniProtKB-KW"/>
</dbReference>
<dbReference type="Gene3D" id="3.90.209.20">
    <property type="match status" value="1"/>
</dbReference>
<dbReference type="Gene3D" id="2.10.77.10">
    <property type="entry name" value="Hemagglutinin Chain A, Domain 2"/>
    <property type="match status" value="1"/>
</dbReference>
<dbReference type="InterPro" id="IPR008980">
    <property type="entry name" value="Capsid_hemagglutn"/>
</dbReference>
<dbReference type="InterPro" id="IPR013828">
    <property type="entry name" value="Hemagglutn_HA1_a/b_dom_sf"/>
</dbReference>
<dbReference type="InterPro" id="IPR001364">
    <property type="entry name" value="Hemagglutn_influenz_A/B"/>
</dbReference>
<dbReference type="Pfam" id="PF00509">
    <property type="entry name" value="Hemagglutinin"/>
    <property type="match status" value="1"/>
</dbReference>
<dbReference type="SUPFAM" id="SSF49818">
    <property type="entry name" value="Viral protein domain"/>
    <property type="match status" value="1"/>
</dbReference>
<proteinExistence type="inferred from homology"/>
<sequence length="347" mass="37436">DRICTGITSSNSPHVVKTATQGEVNVTGVIPLTTTPTKSHFANLKGTKTRGKLCPKCLNCTDLDVALGRPKCMGTIPSAKASILHEVKPVTSGCFPIMHDRTKXRQLPNLLRGYENIRLSTHNVINAETAPGGPYIVGTSGSCPNVTNGNGFFATMAWAVPKNNNNKTATNPLTVEVPFICTKGEDQITVWGFHSDDETQMVKLYGDSKPQKFTSSANGVTTHYVSQIGGFPNQAEDGGLPQSGRIVVDYMVQKSGKTGTITYQRGILLPQKVWCASGRSKVIKGSLPLIGEADCLHEKYGGLNKSKPYYTGEHAKAIGNCPIWVKTPLKLANGTKYRPPAKLLKER</sequence>